<reference key="1">
    <citation type="journal article" date="1996" name="DNA Res.">
        <title>Sequence analysis of the genome of the unicellular cyanobacterium Synechocystis sp. strain PCC6803. II. Sequence determination of the entire genome and assignment of potential protein-coding regions.</title>
        <authorList>
            <person name="Kaneko T."/>
            <person name="Sato S."/>
            <person name="Kotani H."/>
            <person name="Tanaka A."/>
            <person name="Asamizu E."/>
            <person name="Nakamura Y."/>
            <person name="Miyajima N."/>
            <person name="Hirosawa M."/>
            <person name="Sugiura M."/>
            <person name="Sasamoto S."/>
            <person name="Kimura T."/>
            <person name="Hosouchi T."/>
            <person name="Matsuno A."/>
            <person name="Muraki A."/>
            <person name="Nakazaki N."/>
            <person name="Naruo K."/>
            <person name="Okumura S."/>
            <person name="Shimpo S."/>
            <person name="Takeuchi C."/>
            <person name="Wada T."/>
            <person name="Watanabe A."/>
            <person name="Yamada M."/>
            <person name="Yasuda M."/>
            <person name="Tabata S."/>
        </authorList>
    </citation>
    <scope>NUCLEOTIDE SEQUENCE [LARGE SCALE GENOMIC DNA]</scope>
    <source>
        <strain>ATCC 27184 / PCC 6803 / Kazusa</strain>
    </source>
</reference>
<reference key="2">
    <citation type="journal article" date="2015" name="Plant Cell">
        <title>A dedicated type II NADPH dehydrogenase performs the penultimate step in the biosynthesis of vitamin K1 in Synechocystis and Arabidopsis.</title>
        <authorList>
            <person name="Fatihi A."/>
            <person name="Latimer S."/>
            <person name="Schmollinger S."/>
            <person name="Block A."/>
            <person name="Dussault P.H."/>
            <person name="Vermaas W.F."/>
            <person name="Merchant S.S."/>
            <person name="Basset G.J."/>
        </authorList>
    </citation>
    <scope>FUNCTION</scope>
    <scope>CATALYTIC ACTIVITY</scope>
    <scope>BIOPHYSICOCHEMICAL PROPERTIES</scope>
    <scope>PATHWAY</scope>
    <scope>ACTIVITY REGULATION</scope>
    <scope>DISRUPTION PHENOTYPE</scope>
</reference>
<proteinExistence type="evidence at protein level"/>
<organism evidence="6">
    <name type="scientific">Synechocystis sp. (strain ATCC 27184 / PCC 6803 / Kazusa)</name>
    <dbReference type="NCBI Taxonomy" id="1111708"/>
    <lineage>
        <taxon>Bacteria</taxon>
        <taxon>Bacillati</taxon>
        <taxon>Cyanobacteriota</taxon>
        <taxon>Cyanophyceae</taxon>
        <taxon>Synechococcales</taxon>
        <taxon>Merismopediaceae</taxon>
        <taxon>Synechocystis</taxon>
    </lineage>
</organism>
<name>NDBB_SYNY3</name>
<dbReference type="EC" id="1.6.5.12" evidence="2"/>
<dbReference type="EMBL" id="BA000022">
    <property type="protein sequence ID" value="BAA17783.1"/>
    <property type="molecule type" value="Genomic_DNA"/>
</dbReference>
<dbReference type="PIR" id="S74822">
    <property type="entry name" value="S74822"/>
</dbReference>
<dbReference type="SMR" id="P73735"/>
<dbReference type="IntAct" id="P73735">
    <property type="interactions" value="2"/>
</dbReference>
<dbReference type="STRING" id="1148.gene:10498651"/>
<dbReference type="PaxDb" id="1148-1652865"/>
<dbReference type="EnsemblBacteria" id="BAA17783">
    <property type="protein sequence ID" value="BAA17783"/>
    <property type="gene ID" value="BAA17783"/>
</dbReference>
<dbReference type="KEGG" id="syn:slr1743"/>
<dbReference type="eggNOG" id="COG1252">
    <property type="taxonomic scope" value="Bacteria"/>
</dbReference>
<dbReference type="InParanoid" id="P73735"/>
<dbReference type="PhylomeDB" id="P73735"/>
<dbReference type="SABIO-RK" id="P73735"/>
<dbReference type="UniPathway" id="UPA00995"/>
<dbReference type="Proteomes" id="UP000001425">
    <property type="component" value="Chromosome"/>
</dbReference>
<dbReference type="GO" id="GO:0003955">
    <property type="term" value="F:NAD(P)H dehydrogenase (quinone) activity"/>
    <property type="evidence" value="ECO:0000318"/>
    <property type="project" value="GO_Central"/>
</dbReference>
<dbReference type="GO" id="GO:0019646">
    <property type="term" value="P:aerobic electron transport chain"/>
    <property type="evidence" value="ECO:0000318"/>
    <property type="project" value="GO_Central"/>
</dbReference>
<dbReference type="GO" id="GO:0042372">
    <property type="term" value="P:phylloquinone biosynthetic process"/>
    <property type="evidence" value="ECO:0007669"/>
    <property type="project" value="UniProtKB-UniPathway"/>
</dbReference>
<dbReference type="FunFam" id="3.50.50.100:FF:000010">
    <property type="entry name" value="Alternative NAD(P)H-ubiquinone oxidoreductase C1, chloroplastic/mitochondrial"/>
    <property type="match status" value="1"/>
</dbReference>
<dbReference type="Gene3D" id="3.50.50.100">
    <property type="match status" value="1"/>
</dbReference>
<dbReference type="InterPro" id="IPR036188">
    <property type="entry name" value="FAD/NAD-bd_sf"/>
</dbReference>
<dbReference type="InterPro" id="IPR023753">
    <property type="entry name" value="FAD/NAD-binding_dom"/>
</dbReference>
<dbReference type="InterPro" id="IPR051169">
    <property type="entry name" value="NADH-Q_oxidoreductase"/>
</dbReference>
<dbReference type="PANTHER" id="PTHR42913:SF4">
    <property type="entry name" value="ALTERNATIVE NAD(P)H-UBIQUINONE OXIDOREDUCTASE C1, CHLOROPLASTIC_MITOCHONDRIAL"/>
    <property type="match status" value="1"/>
</dbReference>
<dbReference type="PANTHER" id="PTHR42913">
    <property type="entry name" value="APOPTOSIS-INDUCING FACTOR 1"/>
    <property type="match status" value="1"/>
</dbReference>
<dbReference type="Pfam" id="PF07992">
    <property type="entry name" value="Pyr_redox_2"/>
    <property type="match status" value="1"/>
</dbReference>
<dbReference type="PRINTS" id="PR00368">
    <property type="entry name" value="FADPNR"/>
</dbReference>
<dbReference type="PRINTS" id="PR00411">
    <property type="entry name" value="PNDRDTASEI"/>
</dbReference>
<dbReference type="SUPFAM" id="SSF51905">
    <property type="entry name" value="FAD/NAD(P)-binding domain"/>
    <property type="match status" value="1"/>
</dbReference>
<gene>
    <name evidence="3" type="primary">ndbB</name>
    <name type="ordered locus">slr1743</name>
</gene>
<evidence type="ECO:0000250" key="1"/>
<evidence type="ECO:0000269" key="2">
    <source>
    </source>
</evidence>
<evidence type="ECO:0000303" key="3">
    <source>
    </source>
</evidence>
<evidence type="ECO:0000305" key="4"/>
<evidence type="ECO:0000305" key="5">
    <source>
    </source>
</evidence>
<evidence type="ECO:0000312" key="6">
    <source>
        <dbReference type="Proteomes" id="UP000001425"/>
    </source>
</evidence>
<feature type="chain" id="PRO_0000435625" description="Demethylphylloquinone reductase NdbB">
    <location>
        <begin position="1"/>
        <end position="404"/>
    </location>
</feature>
<feature type="binding site" evidence="1">
    <location>
        <begin position="7"/>
        <end position="43"/>
    </location>
    <ligand>
        <name>FAD</name>
        <dbReference type="ChEBI" id="CHEBI:57692"/>
    </ligand>
</feature>
<feature type="binding site" evidence="1">
    <location>
        <begin position="159"/>
        <end position="195"/>
    </location>
    <ligand>
        <name>NADP(+)</name>
        <dbReference type="ChEBI" id="CHEBI:58349"/>
    </ligand>
</feature>
<sequence length="404" mass="44489">MTDARPRICILGGGFGGLYTALRLGQLSWEGHTPPEIVLVDQRDRFLFAPFLYELVTEEMQTWEIAPPFVELLAESGVIFRQAEVTAIDFDHQKVLLNDQDKGTESLAFDQLVIALGGQTPLPNLPGLKDYGLGFRTLEDAYKLKQKLKSLEQADAEKIRIAIVGGGYSGVELAAKLGDRLGERGRIRIIERGKEILAMSPEFNRQQAQASLSAKGIWVDTETTVTAITATDVTLQFREQEDVIPVDLVLWTVGTTVSPLIRNLALPHNDQGQLRTNAQLQVEGKTNIFALGDGAEGRDASGQLIPTTAQGAFQQTDYCAWNIWANLTGRPLLPCRYQPLGEMLALGTDGAVLSGLGIKLSGPAALLARRLVYLYRFPTWQHQLTVGLNWLTRPLGDWLKNEPS</sequence>
<comment type="function">
    <text evidence="2">Bifunctional oxidoreductase probably ables to act both on prenyl naphthoquinones and on prenyl benzoquinones (PubMed:26023160). Catalyzes the penultimate step in the biosynthesis of vitamin K1 (PubMed:26023160).</text>
</comment>
<comment type="catalytic activity">
    <reaction evidence="2">
        <text>demethylphylloquinone + NADPH + H(+) = demethylphylloquinol + NADP(+)</text>
        <dbReference type="Rhea" id="RHEA:47744"/>
        <dbReference type="ChEBI" id="CHEBI:15378"/>
        <dbReference type="ChEBI" id="CHEBI:31087"/>
        <dbReference type="ChEBI" id="CHEBI:57783"/>
        <dbReference type="ChEBI" id="CHEBI:58349"/>
        <dbReference type="ChEBI" id="CHEBI:87844"/>
        <dbReference type="EC" id="1.6.5.12"/>
    </reaction>
</comment>
<comment type="cofactor">
    <cofactor evidence="5">
        <name>FAD</name>
        <dbReference type="ChEBI" id="CHEBI:57692"/>
    </cofactor>
    <text evidence="1">Binds 1 FAD per subunit.</text>
</comment>
<comment type="activity regulation">
    <text evidence="2">Inhibited by dicumarol.</text>
</comment>
<comment type="biophysicochemical properties">
    <kinetics>
        <KM evidence="2">2.4 uM for menadione</KM>
        <text evidence="2">kcat is 3.2 sec(-1) for menadione.</text>
    </kinetics>
</comment>
<comment type="pathway">
    <text evidence="2">Cofactor biosynthesis; phylloquinone biosynthesis.</text>
</comment>
<comment type="disruption phenotype">
    <text evidence="2">Increased photosensitivity to high light.</text>
</comment>
<comment type="similarity">
    <text evidence="4">Belongs to the NADH dehydrogenase family.</text>
</comment>
<keyword id="KW-0274">FAD</keyword>
<keyword id="KW-0285">Flavoprotein</keyword>
<keyword id="KW-0521">NADP</keyword>
<keyword id="KW-0560">Oxidoreductase</keyword>
<keyword id="KW-1185">Reference proteome</keyword>
<protein>
    <recommendedName>
        <fullName evidence="3">Demethylphylloquinone reductase NdbB</fullName>
        <ecNumber evidence="2">1.6.5.12</ecNumber>
    </recommendedName>
</protein>
<accession>P73735</accession>